<reference key="1">
    <citation type="journal article" date="2008" name="J. Bacteriol.">
        <title>Insights into the environmental resistance gene pool from the genome sequence of the multidrug-resistant environmental isolate Escherichia coli SMS-3-5.</title>
        <authorList>
            <person name="Fricke W.F."/>
            <person name="Wright M.S."/>
            <person name="Lindell A.H."/>
            <person name="Harkins D.M."/>
            <person name="Baker-Austin C."/>
            <person name="Ravel J."/>
            <person name="Stepanauskas R."/>
        </authorList>
    </citation>
    <scope>NUCLEOTIDE SEQUENCE [LARGE SCALE GENOMIC DNA]</scope>
    <source>
        <strain>SMS-3-5 / SECEC</strain>
    </source>
</reference>
<dbReference type="EC" id="3.5.-.-" evidence="1"/>
<dbReference type="EMBL" id="CP000970">
    <property type="protein sequence ID" value="ACB16283.1"/>
    <property type="molecule type" value="Genomic_DNA"/>
</dbReference>
<dbReference type="RefSeq" id="WP_001126780.1">
    <property type="nucleotide sequence ID" value="NC_010498.1"/>
</dbReference>
<dbReference type="SMR" id="B1LIZ5"/>
<dbReference type="GeneID" id="75171086"/>
<dbReference type="KEGG" id="ecm:EcSMS35_2115"/>
<dbReference type="HOGENOM" id="CLU_100715_7_3_6"/>
<dbReference type="Proteomes" id="UP000007011">
    <property type="component" value="Chromosome"/>
</dbReference>
<dbReference type="GO" id="GO:0005829">
    <property type="term" value="C:cytosol"/>
    <property type="evidence" value="ECO:0007669"/>
    <property type="project" value="TreeGrafter"/>
</dbReference>
<dbReference type="GO" id="GO:0019239">
    <property type="term" value="F:deaminase activity"/>
    <property type="evidence" value="ECO:0007669"/>
    <property type="project" value="TreeGrafter"/>
</dbReference>
<dbReference type="GO" id="GO:0019740">
    <property type="term" value="P:nitrogen utilization"/>
    <property type="evidence" value="ECO:0007669"/>
    <property type="project" value="UniProtKB-UniRule"/>
</dbReference>
<dbReference type="GO" id="GO:0006212">
    <property type="term" value="P:uracil catabolic process"/>
    <property type="evidence" value="ECO:0007669"/>
    <property type="project" value="UniProtKB-UniRule"/>
</dbReference>
<dbReference type="CDD" id="cd00448">
    <property type="entry name" value="YjgF_YER057c_UK114_family"/>
    <property type="match status" value="1"/>
</dbReference>
<dbReference type="FunFam" id="3.30.1330.40:FF:000003">
    <property type="entry name" value="Putative aminoacrylate peracid reductase RutC"/>
    <property type="match status" value="1"/>
</dbReference>
<dbReference type="Gene3D" id="3.30.1330.40">
    <property type="entry name" value="RutC-like"/>
    <property type="match status" value="1"/>
</dbReference>
<dbReference type="HAMAP" id="MF_00831">
    <property type="entry name" value="RutC"/>
    <property type="match status" value="1"/>
</dbReference>
<dbReference type="InterPro" id="IPR019897">
    <property type="entry name" value="RidA_CS"/>
</dbReference>
<dbReference type="InterPro" id="IPR019898">
    <property type="entry name" value="RutC"/>
</dbReference>
<dbReference type="InterPro" id="IPR035959">
    <property type="entry name" value="RutC-like_sf"/>
</dbReference>
<dbReference type="InterPro" id="IPR006175">
    <property type="entry name" value="YjgF/YER057c/UK114"/>
</dbReference>
<dbReference type="NCBIfam" id="TIGR03610">
    <property type="entry name" value="RutC"/>
    <property type="match status" value="1"/>
</dbReference>
<dbReference type="PANTHER" id="PTHR11803">
    <property type="entry name" value="2-IMINOBUTANOATE/2-IMINOPROPANOATE DEAMINASE RIDA"/>
    <property type="match status" value="1"/>
</dbReference>
<dbReference type="PANTHER" id="PTHR11803:SF58">
    <property type="entry name" value="PROTEIN HMF1-RELATED"/>
    <property type="match status" value="1"/>
</dbReference>
<dbReference type="Pfam" id="PF01042">
    <property type="entry name" value="Ribonuc_L-PSP"/>
    <property type="match status" value="1"/>
</dbReference>
<dbReference type="SUPFAM" id="SSF55298">
    <property type="entry name" value="YjgF-like"/>
    <property type="match status" value="1"/>
</dbReference>
<dbReference type="PROSITE" id="PS01094">
    <property type="entry name" value="UPF0076"/>
    <property type="match status" value="1"/>
</dbReference>
<evidence type="ECO:0000255" key="1">
    <source>
        <dbReference type="HAMAP-Rule" id="MF_00831"/>
    </source>
</evidence>
<accession>B1LIZ5</accession>
<gene>
    <name evidence="1" type="primary">rutC</name>
    <name type="ordered locus">EcSMS35_2115</name>
</gene>
<keyword id="KW-0378">Hydrolase</keyword>
<sequence>MPKSVIIPAGSSAPLAPFVPGTLADGVVYVSGTLAFDQHNNVLFADDPKAQTRHVLETIRKVIETAGGTMADVTFNSIFITDWKNYAAINEIYAEFFPGDKPARFCIQCGLVKPDALVEIATIAHIAK</sequence>
<proteinExistence type="inferred from homology"/>
<protein>
    <recommendedName>
        <fullName evidence="1">3-aminoacrylate deaminase RutC</fullName>
        <shortName evidence="1">3-AA deaminase</shortName>
        <ecNumber evidence="1">3.5.-.-</ecNumber>
    </recommendedName>
</protein>
<comment type="function">
    <text evidence="1">Involved in pyrimidine catabolism. Catalyzes the deamination of 3-aminoacrylate to malonic semialdehyde, a reaction that can also occur spontaneously. RutC may facilitate the reaction and modulate the metabolic fitness, rather than catalyzing essential functions.</text>
</comment>
<comment type="catalytic activity">
    <reaction evidence="1">
        <text>(Z)-3-aminoacrylate + H2O + H(+) = 3-oxopropanoate + NH4(+)</text>
        <dbReference type="Rhea" id="RHEA:34947"/>
        <dbReference type="ChEBI" id="CHEBI:15377"/>
        <dbReference type="ChEBI" id="CHEBI:15378"/>
        <dbReference type="ChEBI" id="CHEBI:28938"/>
        <dbReference type="ChEBI" id="CHEBI:33190"/>
        <dbReference type="ChEBI" id="CHEBI:59894"/>
    </reaction>
</comment>
<comment type="subunit">
    <text evidence="1">Homotrimer.</text>
</comment>
<comment type="similarity">
    <text evidence="1">Belongs to the RutC family.</text>
</comment>
<organism>
    <name type="scientific">Escherichia coli (strain SMS-3-5 / SECEC)</name>
    <dbReference type="NCBI Taxonomy" id="439855"/>
    <lineage>
        <taxon>Bacteria</taxon>
        <taxon>Pseudomonadati</taxon>
        <taxon>Pseudomonadota</taxon>
        <taxon>Gammaproteobacteria</taxon>
        <taxon>Enterobacterales</taxon>
        <taxon>Enterobacteriaceae</taxon>
        <taxon>Escherichia</taxon>
    </lineage>
</organism>
<feature type="chain" id="PRO_0000402730" description="3-aminoacrylate deaminase RutC">
    <location>
        <begin position="1"/>
        <end position="128"/>
    </location>
</feature>
<name>RUTC_ECOSM</name>